<evidence type="ECO:0000250" key="1"/>
<evidence type="ECO:0000305" key="2"/>
<proteinExistence type="inferred from homology"/>
<feature type="chain" id="PRO_0000161583" description="Putative carboxymethylenebutenolidase">
    <location>
        <begin position="1"/>
        <end position="267"/>
    </location>
</feature>
<feature type="active site" evidence="1">
    <location>
        <position position="137"/>
    </location>
</feature>
<feature type="active site" evidence="1">
    <location>
        <position position="194"/>
    </location>
</feature>
<feature type="active site" evidence="1">
    <location>
        <position position="226"/>
    </location>
</feature>
<gene>
    <name type="ordered locus">YPO3787</name>
    <name type="ordered locus">y0443</name>
    <name type="ordered locus">YP_3262</name>
</gene>
<organism>
    <name type="scientific">Yersinia pestis</name>
    <dbReference type="NCBI Taxonomy" id="632"/>
    <lineage>
        <taxon>Bacteria</taxon>
        <taxon>Pseudomonadati</taxon>
        <taxon>Pseudomonadota</taxon>
        <taxon>Gammaproteobacteria</taxon>
        <taxon>Enterobacterales</taxon>
        <taxon>Yersiniaceae</taxon>
        <taxon>Yersinia</taxon>
    </lineage>
</organism>
<comment type="catalytic activity">
    <reaction>
        <text>2-(5-oxo-2,5-dihydrofuran-2-ylidene)acetate + H2O = 4-oxohex-2-enedioate + H(+)</text>
        <dbReference type="Rhea" id="RHEA:12372"/>
        <dbReference type="ChEBI" id="CHEBI:12040"/>
        <dbReference type="ChEBI" id="CHEBI:15377"/>
        <dbReference type="ChEBI" id="CHEBI:15378"/>
        <dbReference type="ChEBI" id="CHEBI:57263"/>
        <dbReference type="EC" id="3.1.1.45"/>
    </reaction>
</comment>
<comment type="similarity">
    <text evidence="2">Belongs to the dienelactone hydrolase family.</text>
</comment>
<comment type="sequence caution" evidence="2">
    <conflict type="erroneous initiation">
        <sequence resource="EMBL-CDS" id="AAM84032"/>
    </conflict>
</comment>
<comment type="sequence caution" evidence="2">
    <conflict type="erroneous initiation">
        <sequence resource="EMBL-CDS" id="AAS63430"/>
    </conflict>
</comment>
<accession>Q8ZAL4</accession>
<accession>Q0WAM4</accession>
<keyword id="KW-0378">Hydrolase</keyword>
<keyword id="KW-1185">Reference proteome</keyword>
<dbReference type="EC" id="3.1.1.45"/>
<dbReference type="EMBL" id="AL590842">
    <property type="protein sequence ID" value="CAL22373.1"/>
    <property type="molecule type" value="Genomic_DNA"/>
</dbReference>
<dbReference type="EMBL" id="AE009952">
    <property type="protein sequence ID" value="AAM84032.1"/>
    <property type="status" value="ALT_INIT"/>
    <property type="molecule type" value="Genomic_DNA"/>
</dbReference>
<dbReference type="EMBL" id="AE017042">
    <property type="protein sequence ID" value="AAS63430.1"/>
    <property type="status" value="ALT_INIT"/>
    <property type="molecule type" value="Genomic_DNA"/>
</dbReference>
<dbReference type="PIR" id="AB0461">
    <property type="entry name" value="AB0461"/>
</dbReference>
<dbReference type="RefSeq" id="YP_002348664.1">
    <property type="nucleotide sequence ID" value="NC_003143.1"/>
</dbReference>
<dbReference type="SMR" id="Q8ZAL4"/>
<dbReference type="STRING" id="214092.YPO3787"/>
<dbReference type="ESTHER" id="yerpe-dlhh">
    <property type="family name" value="Dienelactone_hydrolase"/>
</dbReference>
<dbReference type="PaxDb" id="214092-YPO3787"/>
<dbReference type="DNASU" id="1145390"/>
<dbReference type="EnsemblBacteria" id="AAS63430">
    <property type="protein sequence ID" value="AAS63430"/>
    <property type="gene ID" value="YP_3262"/>
</dbReference>
<dbReference type="KEGG" id="ype:YPO3787"/>
<dbReference type="KEGG" id="ypk:y0443"/>
<dbReference type="KEGG" id="ypm:YP_3262"/>
<dbReference type="PATRIC" id="fig|214092.21.peg.4309"/>
<dbReference type="eggNOG" id="COG0412">
    <property type="taxonomic scope" value="Bacteria"/>
</dbReference>
<dbReference type="HOGENOM" id="CLU_054590_7_0_6"/>
<dbReference type="OMA" id="QCGAKHI"/>
<dbReference type="OrthoDB" id="9787933at2"/>
<dbReference type="Proteomes" id="UP000000815">
    <property type="component" value="Chromosome"/>
</dbReference>
<dbReference type="Proteomes" id="UP000001019">
    <property type="component" value="Chromosome"/>
</dbReference>
<dbReference type="Proteomes" id="UP000002490">
    <property type="component" value="Chromosome"/>
</dbReference>
<dbReference type="GO" id="GO:0008806">
    <property type="term" value="F:carboxymethylenebutenolidase activity"/>
    <property type="evidence" value="ECO:0007669"/>
    <property type="project" value="UniProtKB-EC"/>
</dbReference>
<dbReference type="Gene3D" id="3.40.50.1820">
    <property type="entry name" value="alpha/beta hydrolase"/>
    <property type="match status" value="1"/>
</dbReference>
<dbReference type="InterPro" id="IPR029058">
    <property type="entry name" value="AB_hydrolase_fold"/>
</dbReference>
<dbReference type="InterPro" id="IPR002925">
    <property type="entry name" value="Dienelactn_hydro"/>
</dbReference>
<dbReference type="InterPro" id="IPR051049">
    <property type="entry name" value="Dienelactone_hydrolase-like"/>
</dbReference>
<dbReference type="PANTHER" id="PTHR46623:SF6">
    <property type="entry name" value="ALPHA_BETA-HYDROLASES SUPERFAMILY PROTEIN"/>
    <property type="match status" value="1"/>
</dbReference>
<dbReference type="PANTHER" id="PTHR46623">
    <property type="entry name" value="CARBOXYMETHYLENEBUTENOLIDASE-RELATED"/>
    <property type="match status" value="1"/>
</dbReference>
<dbReference type="Pfam" id="PF01738">
    <property type="entry name" value="DLH"/>
    <property type="match status" value="1"/>
</dbReference>
<dbReference type="SUPFAM" id="SSF53474">
    <property type="entry name" value="alpha/beta-Hydrolases"/>
    <property type="match status" value="1"/>
</dbReference>
<name>DLHH_YERPE</name>
<protein>
    <recommendedName>
        <fullName>Putative carboxymethylenebutenolidase</fullName>
        <ecNumber>3.1.1.45</ecNumber>
    </recommendedName>
    <alternativeName>
        <fullName>Dienelactone hydrolase</fullName>
        <shortName>DLH</shortName>
    </alternativeName>
</protein>
<sequence length="267" mass="29671">MATAHHTDQLHSLQTHGIHCGETTIPSQGDELPAYIAKPDQHTGPYPVVIVVQEIFGVHEHIQDICRRLAKQGYLAIAPELYFRQGDAKDYSNINELVNNLVKKVPDRQVLVDLDHTAHWASRHGGDTKKLAITGFCWGGRIAWLYAAHNPQLKAAVAWYGKLVGEKTLFLPKYPVDVAIDLCAPVLGLYGGKDTSIPAEHIETMRQALRAANADAEIIVYPEAGHAFNADYRPSYHAESAQDGWQRMLDWFTQHGVSAIPIPEETQ</sequence>
<reference key="1">
    <citation type="journal article" date="2001" name="Nature">
        <title>Genome sequence of Yersinia pestis, the causative agent of plague.</title>
        <authorList>
            <person name="Parkhill J."/>
            <person name="Wren B.W."/>
            <person name="Thomson N.R."/>
            <person name="Titball R.W."/>
            <person name="Holden M.T.G."/>
            <person name="Prentice M.B."/>
            <person name="Sebaihia M."/>
            <person name="James K.D."/>
            <person name="Churcher C.M."/>
            <person name="Mungall K.L."/>
            <person name="Baker S."/>
            <person name="Basham D."/>
            <person name="Bentley S.D."/>
            <person name="Brooks K."/>
            <person name="Cerdeno-Tarraga A.-M."/>
            <person name="Chillingworth T."/>
            <person name="Cronin A."/>
            <person name="Davies R.M."/>
            <person name="Davis P."/>
            <person name="Dougan G."/>
            <person name="Feltwell T."/>
            <person name="Hamlin N."/>
            <person name="Holroyd S."/>
            <person name="Jagels K."/>
            <person name="Karlyshev A.V."/>
            <person name="Leather S."/>
            <person name="Moule S."/>
            <person name="Oyston P.C.F."/>
            <person name="Quail M.A."/>
            <person name="Rutherford K.M."/>
            <person name="Simmonds M."/>
            <person name="Skelton J."/>
            <person name="Stevens K."/>
            <person name="Whitehead S."/>
            <person name="Barrell B.G."/>
        </authorList>
    </citation>
    <scope>NUCLEOTIDE SEQUENCE [LARGE SCALE GENOMIC DNA]</scope>
    <source>
        <strain>CO-92 / Biovar Orientalis</strain>
    </source>
</reference>
<reference key="2">
    <citation type="journal article" date="2002" name="J. Bacteriol.">
        <title>Genome sequence of Yersinia pestis KIM.</title>
        <authorList>
            <person name="Deng W."/>
            <person name="Burland V."/>
            <person name="Plunkett G. III"/>
            <person name="Boutin A."/>
            <person name="Mayhew G.F."/>
            <person name="Liss P."/>
            <person name="Perna N.T."/>
            <person name="Rose D.J."/>
            <person name="Mau B."/>
            <person name="Zhou S."/>
            <person name="Schwartz D.C."/>
            <person name="Fetherston J.D."/>
            <person name="Lindler L.E."/>
            <person name="Brubaker R.R."/>
            <person name="Plano G.V."/>
            <person name="Straley S.C."/>
            <person name="McDonough K.A."/>
            <person name="Nilles M.L."/>
            <person name="Matson J.S."/>
            <person name="Blattner F.R."/>
            <person name="Perry R.D."/>
        </authorList>
    </citation>
    <scope>NUCLEOTIDE SEQUENCE [LARGE SCALE GENOMIC DNA]</scope>
    <source>
        <strain>KIM10+ / Biovar Mediaevalis</strain>
    </source>
</reference>
<reference key="3">
    <citation type="journal article" date="2004" name="DNA Res.">
        <title>Complete genome sequence of Yersinia pestis strain 91001, an isolate avirulent to humans.</title>
        <authorList>
            <person name="Song Y."/>
            <person name="Tong Z."/>
            <person name="Wang J."/>
            <person name="Wang L."/>
            <person name="Guo Z."/>
            <person name="Han Y."/>
            <person name="Zhang J."/>
            <person name="Pei D."/>
            <person name="Zhou D."/>
            <person name="Qin H."/>
            <person name="Pang X."/>
            <person name="Han Y."/>
            <person name="Zhai J."/>
            <person name="Li M."/>
            <person name="Cui B."/>
            <person name="Qi Z."/>
            <person name="Jin L."/>
            <person name="Dai R."/>
            <person name="Chen F."/>
            <person name="Li S."/>
            <person name="Ye C."/>
            <person name="Du Z."/>
            <person name="Lin W."/>
            <person name="Wang J."/>
            <person name="Yu J."/>
            <person name="Yang H."/>
            <person name="Wang J."/>
            <person name="Huang P."/>
            <person name="Yang R."/>
        </authorList>
    </citation>
    <scope>NUCLEOTIDE SEQUENCE [LARGE SCALE GENOMIC DNA]</scope>
    <source>
        <strain>91001 / Biovar Mediaevalis</strain>
    </source>
</reference>